<sequence>MSAIRTLHQQLIAKERSAVEILTETFAHIEAVEPKVKAFLTLTKEQALAQAAQVDAKIAAGETIGLLEGIPIAIKDNLCTKGIQTTCASRILEGFVPTYESTVTQELQEAGAIMVGKTNLDEFAMGSSTENSGYQVTGNPWDVTRVPGGSSGGSAAAVAAGEAPIALGSDTGGSIRQPASLCGVVGLKPTYGLVSRFGLVAYASSLDQIGPFARTVEDTAILLEAIAGHDPKDSTSLDVDIPQYSQLLQPELPKDKPLKIGIIQETFGEGLDPEVAEAVQKAIAQLQELGAEVETISCPRFRYGLPAYYIIAPSEASANLARYDAVKYGTRNAAADNLVDMYTQTRAAGFGPEVKRRIMLGTYTLSAGYYDAYYLKAQKVRTLIKKDFDQAFAKVDVLICPTSPSTAFKAGEKTDDPLSMYLSDLMTIPVNLAGLPALSLPCGFDAQGLPIGMQLIGNVLREDLLLQVAHVYEQATAWHQKQPQL</sequence>
<gene>
    <name evidence="1" type="primary">gatA</name>
    <name type="ordered locus">SYNPCC7002_A1025</name>
</gene>
<organism>
    <name type="scientific">Picosynechococcus sp. (strain ATCC 27264 / PCC 7002 / PR-6)</name>
    <name type="common">Agmenellum quadruplicatum</name>
    <dbReference type="NCBI Taxonomy" id="32049"/>
    <lineage>
        <taxon>Bacteria</taxon>
        <taxon>Bacillati</taxon>
        <taxon>Cyanobacteriota</taxon>
        <taxon>Cyanophyceae</taxon>
        <taxon>Oscillatoriophycideae</taxon>
        <taxon>Chroococcales</taxon>
        <taxon>Geminocystaceae</taxon>
        <taxon>Picosynechococcus</taxon>
    </lineage>
</organism>
<dbReference type="EC" id="6.3.5.7" evidence="1"/>
<dbReference type="EMBL" id="CP000951">
    <property type="protein sequence ID" value="ACA99028.1"/>
    <property type="molecule type" value="Genomic_DNA"/>
</dbReference>
<dbReference type="RefSeq" id="WP_012306652.1">
    <property type="nucleotide sequence ID" value="NZ_JAHHPU010000001.1"/>
</dbReference>
<dbReference type="SMR" id="B1XJG8"/>
<dbReference type="STRING" id="32049.SYNPCC7002_A1025"/>
<dbReference type="KEGG" id="syp:SYNPCC7002_A1025"/>
<dbReference type="eggNOG" id="COG0154">
    <property type="taxonomic scope" value="Bacteria"/>
</dbReference>
<dbReference type="HOGENOM" id="CLU_009600_0_3_3"/>
<dbReference type="Proteomes" id="UP000001688">
    <property type="component" value="Chromosome"/>
</dbReference>
<dbReference type="GO" id="GO:0030956">
    <property type="term" value="C:glutamyl-tRNA(Gln) amidotransferase complex"/>
    <property type="evidence" value="ECO:0007669"/>
    <property type="project" value="InterPro"/>
</dbReference>
<dbReference type="GO" id="GO:0005524">
    <property type="term" value="F:ATP binding"/>
    <property type="evidence" value="ECO:0007669"/>
    <property type="project" value="UniProtKB-KW"/>
</dbReference>
<dbReference type="GO" id="GO:0050567">
    <property type="term" value="F:glutaminyl-tRNA synthase (glutamine-hydrolyzing) activity"/>
    <property type="evidence" value="ECO:0007669"/>
    <property type="project" value="UniProtKB-UniRule"/>
</dbReference>
<dbReference type="GO" id="GO:0006412">
    <property type="term" value="P:translation"/>
    <property type="evidence" value="ECO:0007669"/>
    <property type="project" value="UniProtKB-UniRule"/>
</dbReference>
<dbReference type="Gene3D" id="3.90.1300.10">
    <property type="entry name" value="Amidase signature (AS) domain"/>
    <property type="match status" value="1"/>
</dbReference>
<dbReference type="HAMAP" id="MF_00120">
    <property type="entry name" value="GatA"/>
    <property type="match status" value="1"/>
</dbReference>
<dbReference type="InterPro" id="IPR000120">
    <property type="entry name" value="Amidase"/>
</dbReference>
<dbReference type="InterPro" id="IPR020556">
    <property type="entry name" value="Amidase_CS"/>
</dbReference>
<dbReference type="InterPro" id="IPR023631">
    <property type="entry name" value="Amidase_dom"/>
</dbReference>
<dbReference type="InterPro" id="IPR036928">
    <property type="entry name" value="AS_sf"/>
</dbReference>
<dbReference type="InterPro" id="IPR004412">
    <property type="entry name" value="GatA"/>
</dbReference>
<dbReference type="NCBIfam" id="TIGR00132">
    <property type="entry name" value="gatA"/>
    <property type="match status" value="1"/>
</dbReference>
<dbReference type="PANTHER" id="PTHR11895:SF151">
    <property type="entry name" value="GLUTAMYL-TRNA(GLN) AMIDOTRANSFERASE SUBUNIT A"/>
    <property type="match status" value="1"/>
</dbReference>
<dbReference type="PANTHER" id="PTHR11895">
    <property type="entry name" value="TRANSAMIDASE"/>
    <property type="match status" value="1"/>
</dbReference>
<dbReference type="Pfam" id="PF01425">
    <property type="entry name" value="Amidase"/>
    <property type="match status" value="1"/>
</dbReference>
<dbReference type="SUPFAM" id="SSF75304">
    <property type="entry name" value="Amidase signature (AS) enzymes"/>
    <property type="match status" value="1"/>
</dbReference>
<dbReference type="PROSITE" id="PS00571">
    <property type="entry name" value="AMIDASES"/>
    <property type="match status" value="1"/>
</dbReference>
<reference key="1">
    <citation type="submission" date="2008-02" db="EMBL/GenBank/DDBJ databases">
        <title>Complete sequence of Synechococcus sp. PCC 7002.</title>
        <authorList>
            <person name="Li T."/>
            <person name="Zhao J."/>
            <person name="Zhao C."/>
            <person name="Liu Z."/>
            <person name="Zhao F."/>
            <person name="Marquardt J."/>
            <person name="Nomura C.T."/>
            <person name="Persson S."/>
            <person name="Detter J.C."/>
            <person name="Richardson P.M."/>
            <person name="Lanz C."/>
            <person name="Schuster S.C."/>
            <person name="Wang J."/>
            <person name="Li S."/>
            <person name="Huang X."/>
            <person name="Cai T."/>
            <person name="Yu Z."/>
            <person name="Luo J."/>
            <person name="Zhao J."/>
            <person name="Bryant D.A."/>
        </authorList>
    </citation>
    <scope>NUCLEOTIDE SEQUENCE [LARGE SCALE GENOMIC DNA]</scope>
    <source>
        <strain>ATCC 27264 / PCC 7002 / PR-6</strain>
    </source>
</reference>
<keyword id="KW-0067">ATP-binding</keyword>
<keyword id="KW-0436">Ligase</keyword>
<keyword id="KW-0547">Nucleotide-binding</keyword>
<keyword id="KW-0648">Protein biosynthesis</keyword>
<keyword id="KW-1185">Reference proteome</keyword>
<evidence type="ECO:0000255" key="1">
    <source>
        <dbReference type="HAMAP-Rule" id="MF_00120"/>
    </source>
</evidence>
<comment type="function">
    <text evidence="1">Allows the formation of correctly charged Gln-tRNA(Gln) through the transamidation of misacylated Glu-tRNA(Gln) in organisms which lack glutaminyl-tRNA synthetase. The reaction takes place in the presence of glutamine and ATP through an activated gamma-phospho-Glu-tRNA(Gln).</text>
</comment>
<comment type="catalytic activity">
    <reaction evidence="1">
        <text>L-glutamyl-tRNA(Gln) + L-glutamine + ATP + H2O = L-glutaminyl-tRNA(Gln) + L-glutamate + ADP + phosphate + H(+)</text>
        <dbReference type="Rhea" id="RHEA:17521"/>
        <dbReference type="Rhea" id="RHEA-COMP:9681"/>
        <dbReference type="Rhea" id="RHEA-COMP:9684"/>
        <dbReference type="ChEBI" id="CHEBI:15377"/>
        <dbReference type="ChEBI" id="CHEBI:15378"/>
        <dbReference type="ChEBI" id="CHEBI:29985"/>
        <dbReference type="ChEBI" id="CHEBI:30616"/>
        <dbReference type="ChEBI" id="CHEBI:43474"/>
        <dbReference type="ChEBI" id="CHEBI:58359"/>
        <dbReference type="ChEBI" id="CHEBI:78520"/>
        <dbReference type="ChEBI" id="CHEBI:78521"/>
        <dbReference type="ChEBI" id="CHEBI:456216"/>
        <dbReference type="EC" id="6.3.5.7"/>
    </reaction>
</comment>
<comment type="subunit">
    <text evidence="1">Heterotrimer of A, B and C subunits.</text>
</comment>
<comment type="similarity">
    <text evidence="1">Belongs to the amidase family. GatA subfamily.</text>
</comment>
<proteinExistence type="inferred from homology"/>
<accession>B1XJG8</accession>
<protein>
    <recommendedName>
        <fullName evidence="1">Glutamyl-tRNA(Gln) amidotransferase subunit A</fullName>
        <shortName evidence="1">Glu-ADT subunit A</shortName>
        <ecNumber evidence="1">6.3.5.7</ecNumber>
    </recommendedName>
</protein>
<feature type="chain" id="PRO_1000095173" description="Glutamyl-tRNA(Gln) amidotransferase subunit A">
    <location>
        <begin position="1"/>
        <end position="485"/>
    </location>
</feature>
<feature type="active site" description="Charge relay system" evidence="1">
    <location>
        <position position="75"/>
    </location>
</feature>
<feature type="active site" description="Charge relay system" evidence="1">
    <location>
        <position position="150"/>
    </location>
</feature>
<feature type="active site" description="Acyl-ester intermediate" evidence="1">
    <location>
        <position position="174"/>
    </location>
</feature>
<name>GATA_PICP2</name>